<reference evidence="14" key="1">
    <citation type="journal article" date="2000" name="Science">
        <title>The genome sequence of Drosophila melanogaster.</title>
        <authorList>
            <person name="Adams M.D."/>
            <person name="Celniker S.E."/>
            <person name="Holt R.A."/>
            <person name="Evans C.A."/>
            <person name="Gocayne J.D."/>
            <person name="Amanatides P.G."/>
            <person name="Scherer S.E."/>
            <person name="Li P.W."/>
            <person name="Hoskins R.A."/>
            <person name="Galle R.F."/>
            <person name="George R.A."/>
            <person name="Lewis S.E."/>
            <person name="Richards S."/>
            <person name="Ashburner M."/>
            <person name="Henderson S.N."/>
            <person name="Sutton G.G."/>
            <person name="Wortman J.R."/>
            <person name="Yandell M.D."/>
            <person name="Zhang Q."/>
            <person name="Chen L.X."/>
            <person name="Brandon R.C."/>
            <person name="Rogers Y.-H.C."/>
            <person name="Blazej R.G."/>
            <person name="Champe M."/>
            <person name="Pfeiffer B.D."/>
            <person name="Wan K.H."/>
            <person name="Doyle C."/>
            <person name="Baxter E.G."/>
            <person name="Helt G."/>
            <person name="Nelson C.R."/>
            <person name="Miklos G.L.G."/>
            <person name="Abril J.F."/>
            <person name="Agbayani A."/>
            <person name="An H.-J."/>
            <person name="Andrews-Pfannkoch C."/>
            <person name="Baldwin D."/>
            <person name="Ballew R.M."/>
            <person name="Basu A."/>
            <person name="Baxendale J."/>
            <person name="Bayraktaroglu L."/>
            <person name="Beasley E.M."/>
            <person name="Beeson K.Y."/>
            <person name="Benos P.V."/>
            <person name="Berman B.P."/>
            <person name="Bhandari D."/>
            <person name="Bolshakov S."/>
            <person name="Borkova D."/>
            <person name="Botchan M.R."/>
            <person name="Bouck J."/>
            <person name="Brokstein P."/>
            <person name="Brottier P."/>
            <person name="Burtis K.C."/>
            <person name="Busam D.A."/>
            <person name="Butler H."/>
            <person name="Cadieu E."/>
            <person name="Center A."/>
            <person name="Chandra I."/>
            <person name="Cherry J.M."/>
            <person name="Cawley S."/>
            <person name="Dahlke C."/>
            <person name="Davenport L.B."/>
            <person name="Davies P."/>
            <person name="de Pablos B."/>
            <person name="Delcher A."/>
            <person name="Deng Z."/>
            <person name="Mays A.D."/>
            <person name="Dew I."/>
            <person name="Dietz S.M."/>
            <person name="Dodson K."/>
            <person name="Doup L.E."/>
            <person name="Downes M."/>
            <person name="Dugan-Rocha S."/>
            <person name="Dunkov B.C."/>
            <person name="Dunn P."/>
            <person name="Durbin K.J."/>
            <person name="Evangelista C.C."/>
            <person name="Ferraz C."/>
            <person name="Ferriera S."/>
            <person name="Fleischmann W."/>
            <person name="Fosler C."/>
            <person name="Gabrielian A.E."/>
            <person name="Garg N.S."/>
            <person name="Gelbart W.M."/>
            <person name="Glasser K."/>
            <person name="Glodek A."/>
            <person name="Gong F."/>
            <person name="Gorrell J.H."/>
            <person name="Gu Z."/>
            <person name="Guan P."/>
            <person name="Harris M."/>
            <person name="Harris N.L."/>
            <person name="Harvey D.A."/>
            <person name="Heiman T.J."/>
            <person name="Hernandez J.R."/>
            <person name="Houck J."/>
            <person name="Hostin D."/>
            <person name="Houston K.A."/>
            <person name="Howland T.J."/>
            <person name="Wei M.-H."/>
            <person name="Ibegwam C."/>
            <person name="Jalali M."/>
            <person name="Kalush F."/>
            <person name="Karpen G.H."/>
            <person name="Ke Z."/>
            <person name="Kennison J.A."/>
            <person name="Ketchum K.A."/>
            <person name="Kimmel B.E."/>
            <person name="Kodira C.D."/>
            <person name="Kraft C.L."/>
            <person name="Kravitz S."/>
            <person name="Kulp D."/>
            <person name="Lai Z."/>
            <person name="Lasko P."/>
            <person name="Lei Y."/>
            <person name="Levitsky A.A."/>
            <person name="Li J.H."/>
            <person name="Li Z."/>
            <person name="Liang Y."/>
            <person name="Lin X."/>
            <person name="Liu X."/>
            <person name="Mattei B."/>
            <person name="McIntosh T.C."/>
            <person name="McLeod M.P."/>
            <person name="McPherson D."/>
            <person name="Merkulov G."/>
            <person name="Milshina N.V."/>
            <person name="Mobarry C."/>
            <person name="Morris J."/>
            <person name="Moshrefi A."/>
            <person name="Mount S.M."/>
            <person name="Moy M."/>
            <person name="Murphy B."/>
            <person name="Murphy L."/>
            <person name="Muzny D.M."/>
            <person name="Nelson D.L."/>
            <person name="Nelson D.R."/>
            <person name="Nelson K.A."/>
            <person name="Nixon K."/>
            <person name="Nusskern D.R."/>
            <person name="Pacleb J.M."/>
            <person name="Palazzolo M."/>
            <person name="Pittman G.S."/>
            <person name="Pan S."/>
            <person name="Pollard J."/>
            <person name="Puri V."/>
            <person name="Reese M.G."/>
            <person name="Reinert K."/>
            <person name="Remington K."/>
            <person name="Saunders R.D.C."/>
            <person name="Scheeler F."/>
            <person name="Shen H."/>
            <person name="Shue B.C."/>
            <person name="Siden-Kiamos I."/>
            <person name="Simpson M."/>
            <person name="Skupski M.P."/>
            <person name="Smith T.J."/>
            <person name="Spier E."/>
            <person name="Spradling A.C."/>
            <person name="Stapleton M."/>
            <person name="Strong R."/>
            <person name="Sun E."/>
            <person name="Svirskas R."/>
            <person name="Tector C."/>
            <person name="Turner R."/>
            <person name="Venter E."/>
            <person name="Wang A.H."/>
            <person name="Wang X."/>
            <person name="Wang Z.-Y."/>
            <person name="Wassarman D.A."/>
            <person name="Weinstock G.M."/>
            <person name="Weissenbach J."/>
            <person name="Williams S.M."/>
            <person name="Woodage T."/>
            <person name="Worley K.C."/>
            <person name="Wu D."/>
            <person name="Yang S."/>
            <person name="Yao Q.A."/>
            <person name="Ye J."/>
            <person name="Yeh R.-F."/>
            <person name="Zaveri J.S."/>
            <person name="Zhan M."/>
            <person name="Zhang G."/>
            <person name="Zhao Q."/>
            <person name="Zheng L."/>
            <person name="Zheng X.H."/>
            <person name="Zhong F.N."/>
            <person name="Zhong W."/>
            <person name="Zhou X."/>
            <person name="Zhu S.C."/>
            <person name="Zhu X."/>
            <person name="Smith H.O."/>
            <person name="Gibbs R.A."/>
            <person name="Myers E.W."/>
            <person name="Rubin G.M."/>
            <person name="Venter J.C."/>
        </authorList>
    </citation>
    <scope>NUCLEOTIDE SEQUENCE [LARGE SCALE GENOMIC DNA]</scope>
    <source>
        <strain evidence="14">Berkeley</strain>
    </source>
</reference>
<reference evidence="14" key="2">
    <citation type="journal article" date="2002" name="Genome Biol.">
        <title>Annotation of the Drosophila melanogaster euchromatic genome: a systematic review.</title>
        <authorList>
            <person name="Misra S."/>
            <person name="Crosby M.A."/>
            <person name="Mungall C.J."/>
            <person name="Matthews B.B."/>
            <person name="Campbell K.S."/>
            <person name="Hradecky P."/>
            <person name="Huang Y."/>
            <person name="Kaminker J.S."/>
            <person name="Millburn G.H."/>
            <person name="Prochnik S.E."/>
            <person name="Smith C.D."/>
            <person name="Tupy J.L."/>
            <person name="Whitfield E.J."/>
            <person name="Bayraktaroglu L."/>
            <person name="Berman B.P."/>
            <person name="Bettencourt B.R."/>
            <person name="Celniker S.E."/>
            <person name="de Grey A.D.N.J."/>
            <person name="Drysdale R.A."/>
            <person name="Harris N.L."/>
            <person name="Richter J."/>
            <person name="Russo S."/>
            <person name="Schroeder A.J."/>
            <person name="Shu S.Q."/>
            <person name="Stapleton M."/>
            <person name="Yamada C."/>
            <person name="Ashburner M."/>
            <person name="Gelbart W.M."/>
            <person name="Rubin G.M."/>
            <person name="Lewis S.E."/>
        </authorList>
    </citation>
    <scope>GENOME REANNOTATION</scope>
    <source>
        <strain evidence="14">Berkeley</strain>
    </source>
</reference>
<reference evidence="12" key="3">
    <citation type="submission" date="2012-04" db="EMBL/GenBank/DDBJ databases">
        <authorList>
            <person name="Carlson J."/>
            <person name="Booth B."/>
            <person name="Frise E."/>
            <person name="Park S."/>
            <person name="Wan K."/>
            <person name="Yu C."/>
            <person name="Celniker S."/>
        </authorList>
    </citation>
    <scope>NUCLEOTIDE SEQUENCE [LARGE SCALE MRNA]</scope>
</reference>
<reference key="4">
    <citation type="journal article" date="2022" name="Dev. Cell">
        <title>A translation control module coordinates germline stem cell differentiation with ribosome biogenesis during Drosophila oogenesis.</title>
        <authorList>
            <person name="Martin E.T."/>
            <person name="Blatt P."/>
            <person name="Nguyen E."/>
            <person name="Lahr R."/>
            <person name="Selvam S."/>
            <person name="Yoon H.A.M."/>
            <person name="Pocchiari T."/>
            <person name="Emtenani S."/>
            <person name="Siekhaus D.E."/>
            <person name="Berman A."/>
            <person name="Fuchs G."/>
            <person name="Rangan P."/>
        </authorList>
    </citation>
    <scope>FUNCTION</scope>
    <scope>DISRUPTION PHENOTYPE</scope>
    <scope>SUBCELLULAR LOCATION</scope>
    <scope>RNA-BINDING</scope>
</reference>
<reference key="5">
    <citation type="journal article" date="2022" name="EMBO J.">
        <title>Macrophage mitochondrial bioenergetics and tissue invasion are boosted by an Atossa-Porthos axis in Drosophila.</title>
        <authorList>
            <person name="Emtenani S."/>
            <person name="Martin E.T."/>
            <person name="Gyoergy A."/>
            <person name="Bicher J."/>
            <person name="Genger J.W."/>
            <person name="Koecher T."/>
            <person name="Akhmanova M."/>
            <person name="Guarda M."/>
            <person name="Roblek M."/>
            <person name="Bergthaler A."/>
            <person name="Hurd T.R."/>
            <person name="Rangan P."/>
            <person name="Siekhaus D.E."/>
        </authorList>
    </citation>
    <scope>FUNCTION</scope>
    <scope>DOMAIN</scope>
    <scope>SUBCELLULAR LOCATION</scope>
    <scope>DEVELOPMENTAL STAGE</scope>
    <scope>TISSUE SPECIFICITY</scope>
</reference>
<proteinExistence type="evidence at protein level"/>
<organism evidence="14">
    <name type="scientific">Drosophila melanogaster</name>
    <name type="common">Fruit fly</name>
    <dbReference type="NCBI Taxonomy" id="7227"/>
    <lineage>
        <taxon>Eukaryota</taxon>
        <taxon>Metazoa</taxon>
        <taxon>Ecdysozoa</taxon>
        <taxon>Arthropoda</taxon>
        <taxon>Hexapoda</taxon>
        <taxon>Insecta</taxon>
        <taxon>Pterygota</taxon>
        <taxon>Neoptera</taxon>
        <taxon>Endopterygota</taxon>
        <taxon>Diptera</taxon>
        <taxon>Brachycera</taxon>
        <taxon>Muscomorpha</taxon>
        <taxon>Ephydroidea</taxon>
        <taxon>Drosophilidae</taxon>
        <taxon>Drosophila</taxon>
        <taxon>Sophophora</taxon>
    </lineage>
</organism>
<gene>
    <name evidence="13" type="primary">pths</name>
    <name evidence="11" type="synonym">DmRH24</name>
    <name evidence="13" type="ORF">CG9253</name>
</gene>
<feature type="chain" id="PRO_0000456958" description="ATP-dependent RNA helicase DDX47">
    <location>
        <begin position="1"/>
        <end position="507"/>
    </location>
</feature>
<feature type="domain" description="Helicase ATP-binding" evidence="3">
    <location>
        <begin position="92"/>
        <end position="263"/>
    </location>
</feature>
<feature type="domain" description="Helicase C-terminal" evidence="4">
    <location>
        <begin position="290"/>
        <end position="434"/>
    </location>
</feature>
<feature type="region of interest" description="Disordered" evidence="6">
    <location>
        <begin position="1"/>
        <end position="58"/>
    </location>
</feature>
<feature type="region of interest" description="Disordered" evidence="6">
    <location>
        <begin position="451"/>
        <end position="507"/>
    </location>
</feature>
<feature type="coiled-coil region" evidence="2">
    <location>
        <begin position="426"/>
        <end position="453"/>
    </location>
</feature>
<feature type="short sequence motif" description="Q motif" evidence="5">
    <location>
        <begin position="61"/>
        <end position="89"/>
    </location>
</feature>
<feature type="short sequence motif" description="DEAD box" evidence="3">
    <location>
        <begin position="211"/>
        <end position="214"/>
    </location>
</feature>
<feature type="compositionally biased region" description="Acidic residues" evidence="6">
    <location>
        <begin position="1"/>
        <end position="31"/>
    </location>
</feature>
<feature type="compositionally biased region" description="Basic and acidic residues" evidence="6">
    <location>
        <begin position="451"/>
        <end position="471"/>
    </location>
</feature>
<feature type="compositionally biased region" description="Basic residues" evidence="6">
    <location>
        <begin position="494"/>
        <end position="507"/>
    </location>
</feature>
<feature type="binding site" evidence="3">
    <location>
        <begin position="105"/>
        <end position="112"/>
    </location>
    <ligand>
        <name>ATP</name>
        <dbReference type="ChEBI" id="CHEBI:30616"/>
    </ligand>
</feature>
<comment type="function">
    <text evidence="7 8">Part of a translational control module, also containing ath/DHX33 and ais/DDX52, which coordinates germline stem cell differentiation with ribosome biogenesis during oogenesis. This module allows for coregulation of ribosomal proteins and non1/GTPBP4, a p53 repressor, preventing p53 stabilization, cell cycle arrest and loss of stem cell differentiation (PubMed:35413237). With atos, adjusts transcription and translation of a subset of OXPHOS genes in macrophages to increase mitochondrial bioenergetics and allow tissue invasion (PubMed:35319107).</text>
</comment>
<comment type="catalytic activity">
    <reaction>
        <text>ATP + H2O = ADP + phosphate + H(+)</text>
        <dbReference type="Rhea" id="RHEA:13065"/>
        <dbReference type="ChEBI" id="CHEBI:15377"/>
        <dbReference type="ChEBI" id="CHEBI:15378"/>
        <dbReference type="ChEBI" id="CHEBI:30616"/>
        <dbReference type="ChEBI" id="CHEBI:43474"/>
        <dbReference type="ChEBI" id="CHEBI:456216"/>
        <dbReference type="EC" id="3.6.4.13"/>
    </reaction>
</comment>
<comment type="subcellular location">
    <subcellularLocation>
        <location evidence="7 8">Nucleus</location>
        <location evidence="7 8">Nucleolus</location>
    </subcellularLocation>
</comment>
<comment type="disruption phenotype">
    <text evidence="8">Conditional RNAi-mediated knock-down in germline cells results in hypotrophy of the nucleolus.</text>
</comment>
<comment type="similarity">
    <text evidence="10">Belongs to the DEAD box helicase family. DDX47/RRP3 subfamily.</text>
</comment>
<accession>Q9VIF6</accession>
<sequence length="507" mass="56486">MSETSEDEQTQLQTSDEEEDLGSEEEQEDEDNNHKEGDSEAALSGEDDKGSEDDAAEEQKLTWKDLGLNEALCQACDELKWKAPSKIQREAIPVALQGKDVIGLAETGSGKTGAFALPILHALLENPQRYFALVLTPTRELAFQIGEQFEALGSGIGIKCCVVVGGMDMVAQGLQLAKKPHIIIATPGRLVDHLENMKGFNLKAIKYLVMDEADRILNMDFEVELDKILKVLPRERRTFLFSATMTKKVKKLQRASLKDPVKVEVSNKYQTVEQLQQSYLFIPVKYKDVYLVHILNELAGNSFMIFCSTCNNTVKTALMLRALGLAAIPLHGQMSQNKRLAALNKFKAKNRSILISTDVASRGLDIPHVDVVVNFDIPTHSKDYIHRVGRTARAGRSGKAITLVSQYDIELYQRIEHLLGKQLTLYKCEEDEVMALQERVAEAQRTAKLELKDLEDTRGGHKRGGDTHDDSENFTGARKRMKPMGGTGGGGRKSFGKKNWSKGKQKR</sequence>
<keyword id="KW-0067">ATP-binding</keyword>
<keyword id="KW-0175">Coiled coil</keyword>
<keyword id="KW-0347">Helicase</keyword>
<keyword id="KW-0378">Hydrolase</keyword>
<keyword id="KW-0547">Nucleotide-binding</keyword>
<keyword id="KW-0539">Nucleus</keyword>
<keyword id="KW-1185">Reference proteome</keyword>
<keyword id="KW-0690">Ribosome biogenesis</keyword>
<keyword id="KW-0694">RNA-binding</keyword>
<protein>
    <recommendedName>
        <fullName evidence="10">ATP-dependent RNA helicase DDX47</fullName>
        <ecNumber>3.6.4.13</ecNumber>
    </recommendedName>
    <alternativeName>
        <fullName evidence="1">DEAD box protein 47 homolog</fullName>
    </alternativeName>
    <alternativeName>
        <fullName evidence="9">Protein porthos</fullName>
    </alternativeName>
</protein>
<dbReference type="EC" id="3.6.4.13"/>
<dbReference type="EMBL" id="AE014134">
    <property type="protein sequence ID" value="AAF53963.1"/>
    <property type="molecule type" value="Genomic_DNA"/>
</dbReference>
<dbReference type="EMBL" id="BT133459">
    <property type="protein sequence ID" value="AFH89832.1"/>
    <property type="molecule type" value="mRNA"/>
</dbReference>
<dbReference type="RefSeq" id="NP_610090.1">
    <property type="nucleotide sequence ID" value="NM_136246.3"/>
</dbReference>
<dbReference type="SMR" id="Q9VIF6"/>
<dbReference type="FunCoup" id="Q9VIF6">
    <property type="interactions" value="2624"/>
</dbReference>
<dbReference type="IntAct" id="Q9VIF6">
    <property type="interactions" value="66"/>
</dbReference>
<dbReference type="STRING" id="7227.FBpp0080997"/>
<dbReference type="PaxDb" id="7227-FBpp0080997"/>
<dbReference type="EnsemblMetazoa" id="FBtr0081468">
    <property type="protein sequence ID" value="FBpp0080997"/>
    <property type="gene ID" value="FBgn0032919"/>
</dbReference>
<dbReference type="GeneID" id="35379"/>
<dbReference type="KEGG" id="dme:Dmel_CG9253"/>
<dbReference type="UCSC" id="CG9253-RA">
    <property type="organism name" value="d. melanogaster"/>
</dbReference>
<dbReference type="AGR" id="FB:FBgn0032919"/>
<dbReference type="CTD" id="35379"/>
<dbReference type="FlyBase" id="FBgn0032919">
    <property type="gene designation" value="pths"/>
</dbReference>
<dbReference type="VEuPathDB" id="VectorBase:FBgn0032919"/>
<dbReference type="eggNOG" id="KOG0330">
    <property type="taxonomic scope" value="Eukaryota"/>
</dbReference>
<dbReference type="GeneTree" id="ENSGT00940000155774"/>
<dbReference type="HOGENOM" id="CLU_003041_1_1_1"/>
<dbReference type="InParanoid" id="Q9VIF6"/>
<dbReference type="OMA" id="GIGIKCC"/>
<dbReference type="OrthoDB" id="10261904at2759"/>
<dbReference type="Reactome" id="R-DME-6791226">
    <property type="pathway name" value="Major pathway of rRNA processing in the nucleolus and cytosol"/>
</dbReference>
<dbReference type="BioGRID-ORCS" id="35379">
    <property type="hits" value="1 hit in 1 CRISPR screen"/>
</dbReference>
<dbReference type="GenomeRNAi" id="35379"/>
<dbReference type="PRO" id="PR:Q9VIF6"/>
<dbReference type="Proteomes" id="UP000000803">
    <property type="component" value="Chromosome 2L"/>
</dbReference>
<dbReference type="Bgee" id="FBgn0032919">
    <property type="expression patterns" value="Expressed in enteroblast (Drosophila) in digestive tract and 163 other cell types or tissues"/>
</dbReference>
<dbReference type="ExpressionAtlas" id="Q9VIF6">
    <property type="expression patterns" value="baseline and differential"/>
</dbReference>
<dbReference type="GO" id="GO:0005730">
    <property type="term" value="C:nucleolus"/>
    <property type="evidence" value="ECO:0000314"/>
    <property type="project" value="FlyBase"/>
</dbReference>
<dbReference type="GO" id="GO:0005634">
    <property type="term" value="C:nucleus"/>
    <property type="evidence" value="ECO:0000314"/>
    <property type="project" value="FlyBase"/>
</dbReference>
<dbReference type="GO" id="GO:0005524">
    <property type="term" value="F:ATP binding"/>
    <property type="evidence" value="ECO:0007669"/>
    <property type="project" value="UniProtKB-KW"/>
</dbReference>
<dbReference type="GO" id="GO:0016787">
    <property type="term" value="F:hydrolase activity"/>
    <property type="evidence" value="ECO:0007669"/>
    <property type="project" value="UniProtKB-KW"/>
</dbReference>
<dbReference type="GO" id="GO:0003724">
    <property type="term" value="F:RNA helicase activity"/>
    <property type="evidence" value="ECO:0000250"/>
    <property type="project" value="FlyBase"/>
</dbReference>
<dbReference type="GO" id="GO:0019843">
    <property type="term" value="F:rRNA binding"/>
    <property type="evidence" value="ECO:0000314"/>
    <property type="project" value="FlyBase"/>
</dbReference>
<dbReference type="GO" id="GO:2000767">
    <property type="term" value="P:positive regulation of cytoplasmic translation"/>
    <property type="evidence" value="ECO:0000315"/>
    <property type="project" value="FlyBase"/>
</dbReference>
<dbReference type="GO" id="GO:1903862">
    <property type="term" value="P:positive regulation of oxidative phosphorylation"/>
    <property type="evidence" value="ECO:0000315"/>
    <property type="project" value="FlyBase"/>
</dbReference>
<dbReference type="GO" id="GO:0090070">
    <property type="term" value="P:positive regulation of ribosome biogenesis"/>
    <property type="evidence" value="ECO:0000315"/>
    <property type="project" value="FlyBase"/>
</dbReference>
<dbReference type="GO" id="GO:0042254">
    <property type="term" value="P:ribosome biogenesis"/>
    <property type="evidence" value="ECO:0000315"/>
    <property type="project" value="FlyBase"/>
</dbReference>
<dbReference type="GO" id="GO:0006364">
    <property type="term" value="P:rRNA processing"/>
    <property type="evidence" value="ECO:0000318"/>
    <property type="project" value="GO_Central"/>
</dbReference>
<dbReference type="CDD" id="cd17954">
    <property type="entry name" value="DEADc_DDX47"/>
    <property type="match status" value="1"/>
</dbReference>
<dbReference type="CDD" id="cd18787">
    <property type="entry name" value="SF2_C_DEAD"/>
    <property type="match status" value="1"/>
</dbReference>
<dbReference type="FunFam" id="3.40.50.300:FF:000626">
    <property type="entry name" value="probable ATP-dependent RNA helicase DDX47"/>
    <property type="match status" value="1"/>
</dbReference>
<dbReference type="FunFam" id="3.40.50.300:FF:000681">
    <property type="entry name" value="probable ATP-dependent RNA helicase DDX47"/>
    <property type="match status" value="1"/>
</dbReference>
<dbReference type="Gene3D" id="3.40.50.300">
    <property type="entry name" value="P-loop containing nucleotide triphosphate hydrolases"/>
    <property type="match status" value="2"/>
</dbReference>
<dbReference type="InterPro" id="IPR044765">
    <property type="entry name" value="DDX47/Rrp3_DEADc"/>
</dbReference>
<dbReference type="InterPro" id="IPR011545">
    <property type="entry name" value="DEAD/DEAH_box_helicase_dom"/>
</dbReference>
<dbReference type="InterPro" id="IPR050079">
    <property type="entry name" value="DEAD_box_RNA_helicase"/>
</dbReference>
<dbReference type="InterPro" id="IPR014001">
    <property type="entry name" value="Helicase_ATP-bd"/>
</dbReference>
<dbReference type="InterPro" id="IPR001650">
    <property type="entry name" value="Helicase_C-like"/>
</dbReference>
<dbReference type="InterPro" id="IPR027417">
    <property type="entry name" value="P-loop_NTPase"/>
</dbReference>
<dbReference type="InterPro" id="IPR000629">
    <property type="entry name" value="RNA-helicase_DEAD-box_CS"/>
</dbReference>
<dbReference type="InterPro" id="IPR014014">
    <property type="entry name" value="RNA_helicase_DEAD_Q_motif"/>
</dbReference>
<dbReference type="PANTHER" id="PTHR47959">
    <property type="entry name" value="ATP-DEPENDENT RNA HELICASE RHLE-RELATED"/>
    <property type="match status" value="1"/>
</dbReference>
<dbReference type="PANTHER" id="PTHR47959:SF20">
    <property type="entry name" value="RNA HELICASE"/>
    <property type="match status" value="1"/>
</dbReference>
<dbReference type="Pfam" id="PF00270">
    <property type="entry name" value="DEAD"/>
    <property type="match status" value="1"/>
</dbReference>
<dbReference type="Pfam" id="PF00271">
    <property type="entry name" value="Helicase_C"/>
    <property type="match status" value="1"/>
</dbReference>
<dbReference type="SMART" id="SM00487">
    <property type="entry name" value="DEXDc"/>
    <property type="match status" value="1"/>
</dbReference>
<dbReference type="SMART" id="SM00490">
    <property type="entry name" value="HELICc"/>
    <property type="match status" value="1"/>
</dbReference>
<dbReference type="SUPFAM" id="SSF52540">
    <property type="entry name" value="P-loop containing nucleoside triphosphate hydrolases"/>
    <property type="match status" value="1"/>
</dbReference>
<dbReference type="PROSITE" id="PS00039">
    <property type="entry name" value="DEAD_ATP_HELICASE"/>
    <property type="match status" value="1"/>
</dbReference>
<dbReference type="PROSITE" id="PS51192">
    <property type="entry name" value="HELICASE_ATP_BIND_1"/>
    <property type="match status" value="1"/>
</dbReference>
<dbReference type="PROSITE" id="PS51194">
    <property type="entry name" value="HELICASE_CTER"/>
    <property type="match status" value="1"/>
</dbReference>
<dbReference type="PROSITE" id="PS51195">
    <property type="entry name" value="Q_MOTIF"/>
    <property type="match status" value="1"/>
</dbReference>
<name>DDX47_DROME</name>
<evidence type="ECO:0000250" key="1">
    <source>
        <dbReference type="UniProtKB" id="Q9H0S4"/>
    </source>
</evidence>
<evidence type="ECO:0000255" key="2"/>
<evidence type="ECO:0000255" key="3">
    <source>
        <dbReference type="PROSITE-ProRule" id="PRU00541"/>
    </source>
</evidence>
<evidence type="ECO:0000255" key="4">
    <source>
        <dbReference type="PROSITE-ProRule" id="PRU00542"/>
    </source>
</evidence>
<evidence type="ECO:0000255" key="5">
    <source>
        <dbReference type="PROSITE-ProRule" id="PRU00552"/>
    </source>
</evidence>
<evidence type="ECO:0000256" key="6">
    <source>
        <dbReference type="SAM" id="MobiDB-lite"/>
    </source>
</evidence>
<evidence type="ECO:0000269" key="7">
    <source>
    </source>
</evidence>
<evidence type="ECO:0000269" key="8">
    <source>
    </source>
</evidence>
<evidence type="ECO:0000303" key="9">
    <source>
    </source>
</evidence>
<evidence type="ECO:0000305" key="10"/>
<evidence type="ECO:0000312" key="11">
    <source>
        <dbReference type="EMBL" id="AAF53963.1"/>
    </source>
</evidence>
<evidence type="ECO:0000312" key="12">
    <source>
        <dbReference type="EMBL" id="AFH89832.1"/>
    </source>
</evidence>
<evidence type="ECO:0000312" key="13">
    <source>
        <dbReference type="FlyBase" id="FBgn0032919"/>
    </source>
</evidence>
<evidence type="ECO:0000312" key="14">
    <source>
        <dbReference type="Proteomes" id="UP000000803"/>
    </source>
</evidence>